<feature type="chain" id="PRO_1000115511" description="Trigger factor">
    <location>
        <begin position="1"/>
        <end position="448"/>
    </location>
</feature>
<feature type="domain" description="PPIase FKBP-type" evidence="1">
    <location>
        <begin position="172"/>
        <end position="257"/>
    </location>
</feature>
<organism>
    <name type="scientific">Paraburkholderia phymatum (strain DSM 17167 / CIP 108236 / LMG 21445 / STM815)</name>
    <name type="common">Burkholderia phymatum</name>
    <dbReference type="NCBI Taxonomy" id="391038"/>
    <lineage>
        <taxon>Bacteria</taxon>
        <taxon>Pseudomonadati</taxon>
        <taxon>Pseudomonadota</taxon>
        <taxon>Betaproteobacteria</taxon>
        <taxon>Burkholderiales</taxon>
        <taxon>Burkholderiaceae</taxon>
        <taxon>Paraburkholderia</taxon>
    </lineage>
</organism>
<comment type="function">
    <text evidence="1">Involved in protein export. Acts as a chaperone by maintaining the newly synthesized protein in an open conformation. Functions as a peptidyl-prolyl cis-trans isomerase.</text>
</comment>
<comment type="catalytic activity">
    <reaction evidence="1">
        <text>[protein]-peptidylproline (omega=180) = [protein]-peptidylproline (omega=0)</text>
        <dbReference type="Rhea" id="RHEA:16237"/>
        <dbReference type="Rhea" id="RHEA-COMP:10747"/>
        <dbReference type="Rhea" id="RHEA-COMP:10748"/>
        <dbReference type="ChEBI" id="CHEBI:83833"/>
        <dbReference type="ChEBI" id="CHEBI:83834"/>
        <dbReference type="EC" id="5.2.1.8"/>
    </reaction>
</comment>
<comment type="subcellular location">
    <subcellularLocation>
        <location>Cytoplasm</location>
    </subcellularLocation>
    <text evidence="1">About half TF is bound to the ribosome near the polypeptide exit tunnel while the other half is free in the cytoplasm.</text>
</comment>
<comment type="domain">
    <text evidence="1">Consists of 3 domains; the N-terminus binds the ribosome, the middle domain has PPIase activity, while the C-terminus has intrinsic chaperone activity on its own.</text>
</comment>
<comment type="similarity">
    <text evidence="1">Belongs to the FKBP-type PPIase family. Tig subfamily.</text>
</comment>
<reference key="1">
    <citation type="journal article" date="2014" name="Stand. Genomic Sci.">
        <title>Complete genome sequence of Burkholderia phymatum STM815(T), a broad host range and efficient nitrogen-fixing symbiont of Mimosa species.</title>
        <authorList>
            <person name="Moulin L."/>
            <person name="Klonowska A."/>
            <person name="Caroline B."/>
            <person name="Booth K."/>
            <person name="Vriezen J.A."/>
            <person name="Melkonian R."/>
            <person name="James E.K."/>
            <person name="Young J.P."/>
            <person name="Bena G."/>
            <person name="Hauser L."/>
            <person name="Land M."/>
            <person name="Kyrpides N."/>
            <person name="Bruce D."/>
            <person name="Chain P."/>
            <person name="Copeland A."/>
            <person name="Pitluck S."/>
            <person name="Woyke T."/>
            <person name="Lizotte-Waniewski M."/>
            <person name="Bristow J."/>
            <person name="Riley M."/>
        </authorList>
    </citation>
    <scope>NUCLEOTIDE SEQUENCE [LARGE SCALE GENOMIC DNA]</scope>
    <source>
        <strain>DSM 17167 / CIP 108236 / LMG 21445 / STM815</strain>
    </source>
</reference>
<protein>
    <recommendedName>
        <fullName evidence="1">Trigger factor</fullName>
        <shortName evidence="1">TF</shortName>
        <ecNumber evidence="1">5.2.1.8</ecNumber>
    </recommendedName>
    <alternativeName>
        <fullName evidence="1">PPIase</fullName>
    </alternativeName>
</protein>
<sequence>MANVVENLGKLERRVTISLPKDAVQKEVDSRIRQLAKNVRMPGFRPGKVPLKMVTQQYAGQVEAEVLSDKVGKQFFDISRAENLRVAGQPSFAPKADAVEGDYAFDATFEVYPEVKLGDVATAEIERTKTTISDAEIDRTLDILRKQRVHYHARGEAGEHGDGGADTAAKDGDRVTVDFVGKIDGEAFQGGTADDFAFVLGEGRMLPEFEKAALGLKVGESKEFDLAFPEDYHGKEVAGKTAQFAITMKKIEWPHLPEIDAEFAKSLGIEDGDLTKMRNEIRDNLEREAKRRTQAVVKNQVMDALLKISELDVPKALIEQDQQRLVEMARQDLVQRGVPNAKDAPIPAEMFAEQAERRVKLGLVLAELVKANELQAKPEQIRAEVDEFAKSYEDPKEVVRWYYSNQQRLAEMEAYVVESNVVDFVLSKAKVTDKEVSFEELASATAQA</sequence>
<evidence type="ECO:0000255" key="1">
    <source>
        <dbReference type="HAMAP-Rule" id="MF_00303"/>
    </source>
</evidence>
<name>TIG_PARP8</name>
<accession>B2JGL4</accession>
<gene>
    <name evidence="1" type="primary">tig</name>
    <name type="ordered locus">Bphy_1010</name>
</gene>
<dbReference type="EC" id="5.2.1.8" evidence="1"/>
<dbReference type="EMBL" id="CP001043">
    <property type="protein sequence ID" value="ACC70199.1"/>
    <property type="molecule type" value="Genomic_DNA"/>
</dbReference>
<dbReference type="RefSeq" id="WP_012400415.1">
    <property type="nucleotide sequence ID" value="NC_010622.1"/>
</dbReference>
<dbReference type="SMR" id="B2JGL4"/>
<dbReference type="STRING" id="391038.Bphy_1010"/>
<dbReference type="KEGG" id="bph:Bphy_1010"/>
<dbReference type="eggNOG" id="COG0544">
    <property type="taxonomic scope" value="Bacteria"/>
</dbReference>
<dbReference type="HOGENOM" id="CLU_033058_2_0_4"/>
<dbReference type="OrthoDB" id="9767721at2"/>
<dbReference type="Proteomes" id="UP000001192">
    <property type="component" value="Chromosome 1"/>
</dbReference>
<dbReference type="GO" id="GO:0005737">
    <property type="term" value="C:cytoplasm"/>
    <property type="evidence" value="ECO:0007669"/>
    <property type="project" value="UniProtKB-SubCell"/>
</dbReference>
<dbReference type="GO" id="GO:0003755">
    <property type="term" value="F:peptidyl-prolyl cis-trans isomerase activity"/>
    <property type="evidence" value="ECO:0007669"/>
    <property type="project" value="UniProtKB-UniRule"/>
</dbReference>
<dbReference type="GO" id="GO:0044183">
    <property type="term" value="F:protein folding chaperone"/>
    <property type="evidence" value="ECO:0007669"/>
    <property type="project" value="TreeGrafter"/>
</dbReference>
<dbReference type="GO" id="GO:0043022">
    <property type="term" value="F:ribosome binding"/>
    <property type="evidence" value="ECO:0007669"/>
    <property type="project" value="TreeGrafter"/>
</dbReference>
<dbReference type="GO" id="GO:0051083">
    <property type="term" value="P:'de novo' cotranslational protein folding"/>
    <property type="evidence" value="ECO:0007669"/>
    <property type="project" value="TreeGrafter"/>
</dbReference>
<dbReference type="GO" id="GO:0051301">
    <property type="term" value="P:cell division"/>
    <property type="evidence" value="ECO:0007669"/>
    <property type="project" value="UniProtKB-KW"/>
</dbReference>
<dbReference type="GO" id="GO:0061077">
    <property type="term" value="P:chaperone-mediated protein folding"/>
    <property type="evidence" value="ECO:0007669"/>
    <property type="project" value="TreeGrafter"/>
</dbReference>
<dbReference type="GO" id="GO:0015031">
    <property type="term" value="P:protein transport"/>
    <property type="evidence" value="ECO:0007669"/>
    <property type="project" value="UniProtKB-UniRule"/>
</dbReference>
<dbReference type="GO" id="GO:0043335">
    <property type="term" value="P:protein unfolding"/>
    <property type="evidence" value="ECO:0007669"/>
    <property type="project" value="TreeGrafter"/>
</dbReference>
<dbReference type="FunFam" id="3.10.50.40:FF:000001">
    <property type="entry name" value="Trigger factor"/>
    <property type="match status" value="1"/>
</dbReference>
<dbReference type="Gene3D" id="3.10.50.40">
    <property type="match status" value="1"/>
</dbReference>
<dbReference type="Gene3D" id="3.30.70.1050">
    <property type="entry name" value="Trigger factor ribosome-binding domain"/>
    <property type="match status" value="1"/>
</dbReference>
<dbReference type="Gene3D" id="1.10.3120.10">
    <property type="entry name" value="Trigger factor, C-terminal domain"/>
    <property type="match status" value="1"/>
</dbReference>
<dbReference type="HAMAP" id="MF_00303">
    <property type="entry name" value="Trigger_factor_Tig"/>
    <property type="match status" value="1"/>
</dbReference>
<dbReference type="InterPro" id="IPR046357">
    <property type="entry name" value="PPIase_dom_sf"/>
</dbReference>
<dbReference type="InterPro" id="IPR001179">
    <property type="entry name" value="PPIase_FKBP_dom"/>
</dbReference>
<dbReference type="InterPro" id="IPR005215">
    <property type="entry name" value="Trig_fac"/>
</dbReference>
<dbReference type="InterPro" id="IPR008880">
    <property type="entry name" value="Trigger_fac_C"/>
</dbReference>
<dbReference type="InterPro" id="IPR037041">
    <property type="entry name" value="Trigger_fac_C_sf"/>
</dbReference>
<dbReference type="InterPro" id="IPR008881">
    <property type="entry name" value="Trigger_fac_ribosome-bd_bac"/>
</dbReference>
<dbReference type="InterPro" id="IPR036611">
    <property type="entry name" value="Trigger_fac_ribosome-bd_sf"/>
</dbReference>
<dbReference type="InterPro" id="IPR027304">
    <property type="entry name" value="Trigger_fact/SurA_dom_sf"/>
</dbReference>
<dbReference type="NCBIfam" id="TIGR00115">
    <property type="entry name" value="tig"/>
    <property type="match status" value="1"/>
</dbReference>
<dbReference type="PANTHER" id="PTHR30560">
    <property type="entry name" value="TRIGGER FACTOR CHAPERONE AND PEPTIDYL-PROLYL CIS/TRANS ISOMERASE"/>
    <property type="match status" value="1"/>
</dbReference>
<dbReference type="PANTHER" id="PTHR30560:SF3">
    <property type="entry name" value="TRIGGER FACTOR-LIKE PROTEIN TIG, CHLOROPLASTIC"/>
    <property type="match status" value="1"/>
</dbReference>
<dbReference type="Pfam" id="PF00254">
    <property type="entry name" value="FKBP_C"/>
    <property type="match status" value="1"/>
</dbReference>
<dbReference type="Pfam" id="PF05698">
    <property type="entry name" value="Trigger_C"/>
    <property type="match status" value="1"/>
</dbReference>
<dbReference type="Pfam" id="PF05697">
    <property type="entry name" value="Trigger_N"/>
    <property type="match status" value="1"/>
</dbReference>
<dbReference type="PIRSF" id="PIRSF003095">
    <property type="entry name" value="Trigger_factor"/>
    <property type="match status" value="1"/>
</dbReference>
<dbReference type="SUPFAM" id="SSF54534">
    <property type="entry name" value="FKBP-like"/>
    <property type="match status" value="1"/>
</dbReference>
<dbReference type="SUPFAM" id="SSF109998">
    <property type="entry name" value="Triger factor/SurA peptide-binding domain-like"/>
    <property type="match status" value="1"/>
</dbReference>
<dbReference type="SUPFAM" id="SSF102735">
    <property type="entry name" value="Trigger factor ribosome-binding domain"/>
    <property type="match status" value="1"/>
</dbReference>
<dbReference type="PROSITE" id="PS50059">
    <property type="entry name" value="FKBP_PPIASE"/>
    <property type="match status" value="1"/>
</dbReference>
<keyword id="KW-0131">Cell cycle</keyword>
<keyword id="KW-0132">Cell division</keyword>
<keyword id="KW-0143">Chaperone</keyword>
<keyword id="KW-0963">Cytoplasm</keyword>
<keyword id="KW-0413">Isomerase</keyword>
<keyword id="KW-1185">Reference proteome</keyword>
<keyword id="KW-0697">Rotamase</keyword>
<proteinExistence type="inferred from homology"/>